<sequence length="53" mass="5536">MFRWGIIFLVIALIAAALGFGGLAGTAAGAAKIVFVVGIILFLVSLFMGRKRP</sequence>
<evidence type="ECO:0000255" key="1">
    <source>
        <dbReference type="HAMAP-Rule" id="MF_01361"/>
    </source>
</evidence>
<evidence type="ECO:0000305" key="2"/>
<proteinExistence type="inferred from homology"/>
<dbReference type="EMBL" id="AE005674">
    <property type="protein sequence ID" value="AAN45823.1"/>
    <property type="status" value="ALT_INIT"/>
    <property type="molecule type" value="Genomic_DNA"/>
</dbReference>
<dbReference type="EMBL" id="AE014073">
    <property type="status" value="NOT_ANNOTATED_CDS"/>
    <property type="molecule type" value="Genomic_DNA"/>
</dbReference>
<dbReference type="RefSeq" id="NP_710116.1">
    <property type="nucleotide sequence ID" value="NC_004337.2"/>
</dbReference>
<dbReference type="RefSeq" id="WP_000490275.1">
    <property type="nucleotide sequence ID" value="NZ_WPGW01000013.1"/>
</dbReference>
<dbReference type="STRING" id="198214.SF4408"/>
<dbReference type="PaxDb" id="198214-SF4408"/>
<dbReference type="GeneID" id="1026556"/>
<dbReference type="KEGG" id="sfl:SF4408"/>
<dbReference type="PATRIC" id="fig|198214.7.peg.5195"/>
<dbReference type="HOGENOM" id="CLU_187346_2_0_6"/>
<dbReference type="Proteomes" id="UP000001006">
    <property type="component" value="Chromosome"/>
</dbReference>
<dbReference type="Proteomes" id="UP000002673">
    <property type="component" value="Chromosome"/>
</dbReference>
<dbReference type="GO" id="GO:0005886">
    <property type="term" value="C:plasma membrane"/>
    <property type="evidence" value="ECO:0007669"/>
    <property type="project" value="UniProtKB-SubCell"/>
</dbReference>
<dbReference type="HAMAP" id="MF_01361">
    <property type="entry name" value="UPF0391"/>
    <property type="match status" value="1"/>
</dbReference>
<dbReference type="InterPro" id="IPR009760">
    <property type="entry name" value="DUF1328"/>
</dbReference>
<dbReference type="NCBIfam" id="NF010229">
    <property type="entry name" value="PRK13682.1-4"/>
    <property type="match status" value="1"/>
</dbReference>
<dbReference type="NCBIfam" id="NF010230">
    <property type="entry name" value="PRK13682.1-5"/>
    <property type="match status" value="1"/>
</dbReference>
<dbReference type="Pfam" id="PF07043">
    <property type="entry name" value="DUF1328"/>
    <property type="match status" value="1"/>
</dbReference>
<dbReference type="PIRSF" id="PIRSF036466">
    <property type="entry name" value="UCP036466"/>
    <property type="match status" value="1"/>
</dbReference>
<feature type="chain" id="PRO_0000256788" description="UPF0391 membrane protein YtjA">
    <location>
        <begin position="1"/>
        <end position="53"/>
    </location>
</feature>
<feature type="transmembrane region" description="Helical" evidence="1">
    <location>
        <begin position="4"/>
        <end position="24"/>
    </location>
</feature>
<feature type="transmembrane region" description="Helical" evidence="1">
    <location>
        <begin position="30"/>
        <end position="48"/>
    </location>
</feature>
<name>YTJA_SHIFL</name>
<gene>
    <name evidence="1" type="primary">ytjA</name>
    <name type="ordered locus">SF4408</name>
    <name type="ordered locus">S4679.1</name>
</gene>
<keyword id="KW-1003">Cell membrane</keyword>
<keyword id="KW-0472">Membrane</keyword>
<keyword id="KW-1185">Reference proteome</keyword>
<keyword id="KW-0812">Transmembrane</keyword>
<keyword id="KW-1133">Transmembrane helix</keyword>
<protein>
    <recommendedName>
        <fullName evidence="1">UPF0391 membrane protein YtjA</fullName>
    </recommendedName>
</protein>
<reference key="1">
    <citation type="journal article" date="2002" name="Nucleic Acids Res.">
        <title>Genome sequence of Shigella flexneri 2a: insights into pathogenicity through comparison with genomes of Escherichia coli K12 and O157.</title>
        <authorList>
            <person name="Jin Q."/>
            <person name="Yuan Z."/>
            <person name="Xu J."/>
            <person name="Wang Y."/>
            <person name="Shen Y."/>
            <person name="Lu W."/>
            <person name="Wang J."/>
            <person name="Liu H."/>
            <person name="Yang J."/>
            <person name="Yang F."/>
            <person name="Zhang X."/>
            <person name="Zhang J."/>
            <person name="Yang G."/>
            <person name="Wu H."/>
            <person name="Qu D."/>
            <person name="Dong J."/>
            <person name="Sun L."/>
            <person name="Xue Y."/>
            <person name="Zhao A."/>
            <person name="Gao Y."/>
            <person name="Zhu J."/>
            <person name="Kan B."/>
            <person name="Ding K."/>
            <person name="Chen S."/>
            <person name="Cheng H."/>
            <person name="Yao Z."/>
            <person name="He B."/>
            <person name="Chen R."/>
            <person name="Ma D."/>
            <person name="Qiang B."/>
            <person name="Wen Y."/>
            <person name="Hou Y."/>
            <person name="Yu J."/>
        </authorList>
    </citation>
    <scope>NUCLEOTIDE SEQUENCE [LARGE SCALE GENOMIC DNA]</scope>
    <source>
        <strain>301 / Serotype 2a</strain>
    </source>
</reference>
<reference key="2">
    <citation type="journal article" date="2003" name="Infect. Immun.">
        <title>Complete genome sequence and comparative genomics of Shigella flexneri serotype 2a strain 2457T.</title>
        <authorList>
            <person name="Wei J."/>
            <person name="Goldberg M.B."/>
            <person name="Burland V."/>
            <person name="Venkatesan M.M."/>
            <person name="Deng W."/>
            <person name="Fournier G."/>
            <person name="Mayhew G.F."/>
            <person name="Plunkett G. III"/>
            <person name="Rose D.J."/>
            <person name="Darling A."/>
            <person name="Mau B."/>
            <person name="Perna N.T."/>
            <person name="Payne S.M."/>
            <person name="Runyen-Janecky L.J."/>
            <person name="Zhou S."/>
            <person name="Schwartz D.C."/>
            <person name="Blattner F.R."/>
        </authorList>
    </citation>
    <scope>NUCLEOTIDE SEQUENCE [LARGE SCALE GENOMIC DNA]</scope>
    <source>
        <strain>ATCC 700930 / 2457T / Serotype 2a</strain>
    </source>
</reference>
<accession>Q83IH3</accession>
<organism>
    <name type="scientific">Shigella flexneri</name>
    <dbReference type="NCBI Taxonomy" id="623"/>
    <lineage>
        <taxon>Bacteria</taxon>
        <taxon>Pseudomonadati</taxon>
        <taxon>Pseudomonadota</taxon>
        <taxon>Gammaproteobacteria</taxon>
        <taxon>Enterobacterales</taxon>
        <taxon>Enterobacteriaceae</taxon>
        <taxon>Shigella</taxon>
    </lineage>
</organism>
<comment type="subcellular location">
    <subcellularLocation>
        <location evidence="1">Cell membrane</location>
        <topology evidence="1">Multi-pass membrane protein</topology>
    </subcellularLocation>
</comment>
<comment type="similarity">
    <text evidence="1">Belongs to the UPF0391 family.</text>
</comment>
<comment type="sequence caution" evidence="2">
    <conflict type="erroneous initiation">
        <sequence resource="EMBL-CDS" id="AAN45823"/>
    </conflict>
</comment>